<proteinExistence type="evidence at protein level"/>
<comment type="function">
    <text evidence="2 3 6 7">The small GTPases Rab are key regulators of intracellular membrane trafficking, from the formation of transport vesicles to their fusion with membranes. Rabs cycle between an inactive GDP-bound form and an active GTP-bound form that is able to recruit to membranes different set of downstream effectors directly responsible for vesicle formation, movement, tethering and fusion (By similarity). RAB26 mediates transport of ADRA2A and ADRA2B from the Golgi to the cell membrane (PubMed:23105096). Plays a role in the maturation of zymogenic granules and in pepsinogen secretion in the stomach (PubMed:20038531). Plays a role in the secretion of amylase from acinar granules in the parotid gland (By similarity).</text>
</comment>
<comment type="catalytic activity">
    <reaction evidence="3">
        <text>GTP + H2O = GDP + phosphate + H(+)</text>
        <dbReference type="Rhea" id="RHEA:19669"/>
        <dbReference type="ChEBI" id="CHEBI:15377"/>
        <dbReference type="ChEBI" id="CHEBI:15378"/>
        <dbReference type="ChEBI" id="CHEBI:37565"/>
        <dbReference type="ChEBI" id="CHEBI:43474"/>
        <dbReference type="ChEBI" id="CHEBI:58189"/>
        <dbReference type="EC" id="3.6.5.2"/>
    </reaction>
    <physiologicalReaction direction="left-to-right" evidence="3">
        <dbReference type="Rhea" id="RHEA:19670"/>
    </physiologicalReaction>
</comment>
<comment type="cofactor">
    <cofactor evidence="8">
        <name>Mg(2+)</name>
        <dbReference type="ChEBI" id="CHEBI:18420"/>
    </cofactor>
</comment>
<comment type="activity regulation">
    <text evidence="10">Regulated by guanine nucleotide exchange factors (GEFs) which promote the exchange of bound GDP for free GTP. Regulated by GTPase activating proteins (GAPs) which increase the GTP hydrolysis activity. Inhibited by GDP dissociation inhibitors (GDIs).</text>
</comment>
<comment type="subunit">
    <text evidence="1 7">Interacts with RIMS1 (By similarity). Interacts with ADRA2B.</text>
</comment>
<comment type="interaction">
    <interactant intactId="EBI-958239">
        <id>Q9ULW5</id>
    </interactant>
    <interactant intactId="EBI-9077302">
        <id>P18089</id>
        <label>ADRA2B</label>
    </interactant>
    <organismsDiffer>false</organismsDiffer>
    <experiments>4</experiments>
</comment>
<comment type="interaction">
    <interactant intactId="EBI-958239">
        <id>Q9ULW5</id>
    </interactant>
    <interactant intactId="EBI-750641">
        <id>Q5TD97</id>
        <label>FHL5</label>
    </interactant>
    <organismsDiffer>false</organismsDiffer>
    <experiments>3</experiments>
</comment>
<comment type="interaction">
    <interactant intactId="EBI-958239">
        <id>Q9ULW5</id>
    </interactant>
    <interactant intactId="EBI-1049638">
        <id>Q14525</id>
        <label>KRT33B</label>
    </interactant>
    <organismsDiffer>false</organismsDiffer>
    <experiments>3</experiments>
</comment>
<comment type="interaction">
    <interactant intactId="EBI-958239">
        <id>Q9ULW5</id>
    </interactant>
    <interactant intactId="EBI-536879">
        <id>O43482</id>
        <label>OIP5</label>
    </interactant>
    <organismsDiffer>false</organismsDiffer>
    <experiments>3</experiments>
</comment>
<comment type="interaction">
    <interactant intactId="EBI-958239">
        <id>Q9ULW5</id>
    </interactant>
    <interactant intactId="EBI-12817837">
        <id>Q9H9P5-5</id>
        <label>UNKL</label>
    </interactant>
    <organismsDiffer>false</organismsDiffer>
    <experiments>3</experiments>
</comment>
<comment type="subcellular location">
    <subcellularLocation>
        <location evidence="7">Golgi apparatus membrane</location>
        <topology evidence="7">Lipid-anchor</topology>
        <orientation evidence="7">Cytoplasmic side</orientation>
    </subcellularLocation>
    <subcellularLocation>
        <location evidence="11">Cytoplasmic vesicle</location>
        <location evidence="11">Secretory vesicle membrane</location>
        <topology evidence="11">Lipid-anchor</topology>
        <orientation evidence="11">Cytoplasmic side</orientation>
    </subcellularLocation>
    <text evidence="2">Not localized at the plasma membrane (By similarity). Inhibition of S-geranylgeranyl cysteine formation abolishes membrane location.</text>
</comment>
<comment type="alternative products">
    <event type="alternative splicing"/>
    <isoform>
        <id>Q9ULW5-1</id>
        <name>1</name>
        <sequence type="displayed"/>
    </isoform>
    <isoform>
        <id>Q9ULW5-2</id>
        <name>2</name>
        <sequence type="described" ref="VSP_056879"/>
    </isoform>
</comment>
<comment type="tissue specificity">
    <text>Predominantly expressed in brain.</text>
</comment>
<comment type="domain">
    <text evidence="4">Switch 1, switch 2 and the interswitch regions are characteristic of Rab GTPases and mediate the interactions with Rab downstream effectors. The switch regions undergo conformational changes upon nucleotide binding which drive interaction with specific sets of effector proteins, with most effectors only binding to GTP-bound Rab.</text>
</comment>
<comment type="similarity">
    <text evidence="10">Belongs to the small GTPase superfamily. Rab family.</text>
</comment>
<comment type="sequence caution" evidence="10">
    <conflict type="erroneous initiation">
        <sequence resource="EMBL-CDS" id="BAA84707"/>
    </conflict>
    <text>Truncated N-terminus.</text>
</comment>
<feature type="chain" id="PRO_0000121218" description="Ras-related protein Rab-26">
    <location>
        <begin position="1"/>
        <end position="256"/>
    </location>
</feature>
<feature type="region of interest" description="Disordered" evidence="5">
    <location>
        <begin position="1"/>
        <end position="51"/>
    </location>
</feature>
<feature type="short sequence motif" description="Switch 1" evidence="4">
    <location>
        <begin position="86"/>
        <end position="101"/>
    </location>
</feature>
<feature type="short sequence motif" description="Switch 2" evidence="4">
    <location>
        <begin position="119"/>
        <end position="136"/>
    </location>
</feature>
<feature type="compositionally biased region" description="Low complexity" evidence="5">
    <location>
        <begin position="12"/>
        <end position="23"/>
    </location>
</feature>
<feature type="binding site" evidence="12 14">
    <location>
        <position position="72"/>
    </location>
    <ligand>
        <name>GTP</name>
        <dbReference type="ChEBI" id="CHEBI:37565"/>
    </ligand>
</feature>
<feature type="binding site" evidence="3">
    <location>
        <position position="73"/>
    </location>
    <ligand>
        <name>GTP</name>
        <dbReference type="ChEBI" id="CHEBI:37565"/>
    </ligand>
</feature>
<feature type="binding site" evidence="3">
    <location>
        <position position="74"/>
    </location>
    <ligand>
        <name>GTP</name>
        <dbReference type="ChEBI" id="CHEBI:37565"/>
    </ligand>
</feature>
<feature type="binding site" evidence="12 14">
    <location>
        <position position="75"/>
    </location>
    <ligand>
        <name>GTP</name>
        <dbReference type="ChEBI" id="CHEBI:37565"/>
    </ligand>
</feature>
<feature type="binding site" evidence="12 14">
    <location>
        <position position="76"/>
    </location>
    <ligand>
        <name>GTP</name>
        <dbReference type="ChEBI" id="CHEBI:37565"/>
    </ligand>
</feature>
<feature type="binding site" evidence="12 14">
    <location>
        <position position="77"/>
    </location>
    <ligand>
        <name>GTP</name>
        <dbReference type="ChEBI" id="CHEBI:37565"/>
    </ligand>
</feature>
<feature type="binding site" evidence="8 14">
    <location>
        <position position="77"/>
    </location>
    <ligand>
        <name>Mg(2+)</name>
        <dbReference type="ChEBI" id="CHEBI:18420"/>
    </ligand>
</feature>
<feature type="binding site" evidence="12 14">
    <location>
        <position position="78"/>
    </location>
    <ligand>
        <name>GTP</name>
        <dbReference type="ChEBI" id="CHEBI:37565"/>
    </ligand>
</feature>
<feature type="binding site" evidence="3">
    <location>
        <position position="95"/>
    </location>
    <ligand>
        <name>GTP</name>
        <dbReference type="ChEBI" id="CHEBI:37565"/>
    </ligand>
</feature>
<feature type="binding site" evidence="12 14">
    <location>
        <position position="96"/>
    </location>
    <ligand>
        <name>GTP</name>
        <dbReference type="ChEBI" id="CHEBI:37565"/>
    </ligand>
</feature>
<feature type="binding site" evidence="8 14">
    <location>
        <position position="96"/>
    </location>
    <ligand>
        <name>Mg(2+)</name>
        <dbReference type="ChEBI" id="CHEBI:18420"/>
    </ligand>
</feature>
<feature type="binding site" evidence="3">
    <location>
        <position position="119"/>
    </location>
    <ligand>
        <name>Mg(2+)</name>
        <dbReference type="ChEBI" id="CHEBI:18420"/>
    </ligand>
</feature>
<feature type="binding site" evidence="12 14">
    <location>
        <position position="122"/>
    </location>
    <ligand>
        <name>GTP</name>
        <dbReference type="ChEBI" id="CHEBI:37565"/>
    </ligand>
</feature>
<feature type="binding site" evidence="12 14">
    <location>
        <position position="177"/>
    </location>
    <ligand>
        <name>GTP</name>
        <dbReference type="ChEBI" id="CHEBI:37565"/>
    </ligand>
</feature>
<feature type="binding site" evidence="12 14">
    <location>
        <position position="178"/>
    </location>
    <ligand>
        <name>GTP</name>
        <dbReference type="ChEBI" id="CHEBI:37565"/>
    </ligand>
</feature>
<feature type="binding site" evidence="12 14">
    <location>
        <position position="180"/>
    </location>
    <ligand>
        <name>GTP</name>
        <dbReference type="ChEBI" id="CHEBI:37565"/>
    </ligand>
</feature>
<feature type="binding site" evidence="12 14">
    <location>
        <position position="208"/>
    </location>
    <ligand>
        <name>GTP</name>
        <dbReference type="ChEBI" id="CHEBI:37565"/>
    </ligand>
</feature>
<feature type="binding site" evidence="12 14">
    <location>
        <position position="209"/>
    </location>
    <ligand>
        <name>GTP</name>
        <dbReference type="ChEBI" id="CHEBI:37565"/>
    </ligand>
</feature>
<feature type="lipid moiety-binding region" description="S-geranylgeranyl cysteine" evidence="1">
    <location>
        <position position="253"/>
    </location>
</feature>
<feature type="lipid moiety-binding region" description="S-geranylgeranyl cysteine" evidence="1">
    <location>
        <position position="254"/>
    </location>
</feature>
<feature type="splice variant" id="VSP_056879" description="In isoform 2." evidence="9">
    <location>
        <begin position="1"/>
        <end position="66"/>
    </location>
</feature>
<feature type="mutagenesis site" description="Inactive, constitutively GDP-bound. Abolishes location at Golgi membranes. Impairs transport of ADRA2A and ADRA2B from the Golgi to the cell membrane." evidence="6 7">
    <original>T</original>
    <variation>N</variation>
    <location>
        <position position="77"/>
    </location>
</feature>
<feature type="mutagenesis site" description="Constitutively activated." evidence="7">
    <original>Q</original>
    <variation>L</variation>
    <location>
        <position position="123"/>
    </location>
</feature>
<feature type="mutagenesis site" description="Inactive, due to loss of GNP binding. Abolishes location at Golgi membranes. Impairs transport of ADRA2A and ADRA2B from the Golgi to the cell membrane." evidence="7">
    <original>N</original>
    <variation>I</variation>
    <location>
        <position position="177"/>
    </location>
</feature>
<feature type="sequence conflict" description="In Ref. 5; AAH66913." evidence="10" ref="5">
    <original>Q</original>
    <variation>R</variation>
    <location>
        <position position="227"/>
    </location>
</feature>
<feature type="strand" evidence="15">
    <location>
        <begin position="61"/>
        <end position="69"/>
    </location>
</feature>
<feature type="helix" evidence="15">
    <location>
        <begin position="76"/>
        <end position="85"/>
    </location>
</feature>
<feature type="strand" evidence="15">
    <location>
        <begin position="100"/>
        <end position="108"/>
    </location>
</feature>
<feature type="strand" evidence="15">
    <location>
        <begin position="111"/>
        <end position="119"/>
    </location>
</feature>
<feature type="helix" evidence="15">
    <location>
        <begin position="134"/>
        <end position="136"/>
    </location>
</feature>
<feature type="strand" evidence="15">
    <location>
        <begin position="138"/>
        <end position="145"/>
    </location>
</feature>
<feature type="helix" evidence="15">
    <location>
        <begin position="149"/>
        <end position="153"/>
    </location>
</feature>
<feature type="helix" evidence="15">
    <location>
        <begin position="155"/>
        <end position="165"/>
    </location>
</feature>
<feature type="strand" evidence="15">
    <location>
        <begin position="171"/>
        <end position="177"/>
    </location>
</feature>
<feature type="helix" evidence="15">
    <location>
        <begin position="189"/>
        <end position="198"/>
    </location>
</feature>
<feature type="strand" evidence="15">
    <location>
        <begin position="203"/>
        <end position="205"/>
    </location>
</feature>
<feature type="turn" evidence="15">
    <location>
        <begin position="208"/>
        <end position="210"/>
    </location>
</feature>
<feature type="helix" evidence="15">
    <location>
        <begin position="214"/>
        <end position="226"/>
    </location>
</feature>
<sequence>MSRKKTPKSKGASTPAASTLPTANGARPARSGTALSGPDAPPNGPLQPGRPSLGGGVDFYDVAFKVMLVGDSGVGKTCLLVRFKDGAFLAGTFISTVGIDFRNKVLDVDGVKVKLQMWDTAGQERFRSVTHAYYRDAHALLLLYDVTNKASFDNIQAWLTEIHEYAQHDVALMLLGNKVDSAHERVVKREDGEKLAKEYGLPFMETSAKTGLNVDLAFTAIAKELKQRSMKAPSEPRFRLHDYVKREGRGASCCRP</sequence>
<dbReference type="EC" id="3.6.5.2" evidence="3"/>
<dbReference type="EMBL" id="AY646153">
    <property type="protein sequence ID" value="AAU88191.1"/>
    <property type="molecule type" value="mRNA"/>
</dbReference>
<dbReference type="EMBL" id="AK314110">
    <property type="protein sequence ID" value="BAG36803.1"/>
    <property type="molecule type" value="mRNA"/>
</dbReference>
<dbReference type="EMBL" id="AC009065">
    <property type="status" value="NOT_ANNOTATED_CDS"/>
    <property type="molecule type" value="Genomic_DNA"/>
</dbReference>
<dbReference type="EMBL" id="CH471112">
    <property type="protein sequence ID" value="EAW85552.1"/>
    <property type="molecule type" value="Genomic_DNA"/>
</dbReference>
<dbReference type="EMBL" id="BC066913">
    <property type="protein sequence ID" value="AAH66913.1"/>
    <property type="molecule type" value="mRNA"/>
</dbReference>
<dbReference type="EMBL" id="AB027137">
    <property type="protein sequence ID" value="BAA84707.1"/>
    <property type="status" value="ALT_INIT"/>
    <property type="molecule type" value="mRNA"/>
</dbReference>
<dbReference type="EMBL" id="AF498952">
    <property type="protein sequence ID" value="AAM21100.1"/>
    <property type="molecule type" value="mRNA"/>
</dbReference>
<dbReference type="CCDS" id="CCDS10460.1">
    <molecule id="Q9ULW5-1"/>
</dbReference>
<dbReference type="CCDS" id="CCDS76806.1">
    <molecule id="Q9ULW5-2"/>
</dbReference>
<dbReference type="RefSeq" id="NP_001294982.1">
    <molecule id="Q9ULW5-2"/>
    <property type="nucleotide sequence ID" value="NM_001308053.1"/>
</dbReference>
<dbReference type="RefSeq" id="NP_055168.2">
    <molecule id="Q9ULW5-1"/>
    <property type="nucleotide sequence ID" value="NM_014353.4"/>
</dbReference>
<dbReference type="PDB" id="2G6B">
    <property type="method" value="X-ray"/>
    <property type="resolution" value="2.00 A"/>
    <property type="chains" value="A=56-233"/>
</dbReference>
<dbReference type="PDBsum" id="2G6B"/>
<dbReference type="SMR" id="Q9ULW5"/>
<dbReference type="BioGRID" id="117364">
    <property type="interactions" value="20"/>
</dbReference>
<dbReference type="CORUM" id="Q9ULW5"/>
<dbReference type="FunCoup" id="Q9ULW5">
    <property type="interactions" value="907"/>
</dbReference>
<dbReference type="IntAct" id="Q9ULW5">
    <property type="interactions" value="16"/>
</dbReference>
<dbReference type="MINT" id="Q9ULW5"/>
<dbReference type="STRING" id="9606.ENSP00000210187"/>
<dbReference type="iPTMnet" id="Q9ULW5"/>
<dbReference type="PhosphoSitePlus" id="Q9ULW5"/>
<dbReference type="BioMuta" id="RAB26"/>
<dbReference type="DMDM" id="134044256"/>
<dbReference type="jPOST" id="Q9ULW5"/>
<dbReference type="MassIVE" id="Q9ULW5"/>
<dbReference type="PaxDb" id="9606-ENSP00000210187"/>
<dbReference type="PeptideAtlas" id="Q9ULW5"/>
<dbReference type="ProteomicsDB" id="3418"/>
<dbReference type="ProteomicsDB" id="85142">
    <molecule id="Q9ULW5-1"/>
</dbReference>
<dbReference type="Antibodypedia" id="23581">
    <property type="antibodies" value="190 antibodies from 25 providers"/>
</dbReference>
<dbReference type="DNASU" id="25837"/>
<dbReference type="Ensembl" id="ENST00000210187.11">
    <molecule id="Q9ULW5-1"/>
    <property type="protein sequence ID" value="ENSP00000210187.6"/>
    <property type="gene ID" value="ENSG00000167964.13"/>
</dbReference>
<dbReference type="Ensembl" id="ENST00000541451.5">
    <molecule id="Q9ULW5-2"/>
    <property type="protein sequence ID" value="ENSP00000441580.1"/>
    <property type="gene ID" value="ENSG00000167964.13"/>
</dbReference>
<dbReference type="GeneID" id="25837"/>
<dbReference type="KEGG" id="hsa:25837"/>
<dbReference type="MANE-Select" id="ENST00000210187.11">
    <property type="protein sequence ID" value="ENSP00000210187.6"/>
    <property type="RefSeq nucleotide sequence ID" value="NM_014353.5"/>
    <property type="RefSeq protein sequence ID" value="NP_055168.2"/>
</dbReference>
<dbReference type="UCSC" id="uc002cou.4">
    <molecule id="Q9ULW5-1"/>
    <property type="organism name" value="human"/>
</dbReference>
<dbReference type="AGR" id="HGNC:14259"/>
<dbReference type="CTD" id="25837"/>
<dbReference type="DisGeNET" id="25837"/>
<dbReference type="GeneCards" id="RAB26"/>
<dbReference type="HGNC" id="HGNC:14259">
    <property type="gene designation" value="RAB26"/>
</dbReference>
<dbReference type="HPA" id="ENSG00000167964">
    <property type="expression patterns" value="Tissue enhanced (brain, liver, pancreas)"/>
</dbReference>
<dbReference type="MIM" id="605455">
    <property type="type" value="gene"/>
</dbReference>
<dbReference type="neXtProt" id="NX_Q9ULW5"/>
<dbReference type="OpenTargets" id="ENSG00000167964"/>
<dbReference type="PharmGKB" id="PA34116"/>
<dbReference type="VEuPathDB" id="HostDB:ENSG00000167964"/>
<dbReference type="eggNOG" id="KOG0083">
    <property type="taxonomic scope" value="Eukaryota"/>
</dbReference>
<dbReference type="GeneTree" id="ENSGT00940000158558"/>
<dbReference type="HOGENOM" id="CLU_041217_10_1_1"/>
<dbReference type="InParanoid" id="Q9ULW5"/>
<dbReference type="OMA" id="QRSMKVP"/>
<dbReference type="OrthoDB" id="9989112at2759"/>
<dbReference type="PAN-GO" id="Q9ULW5">
    <property type="GO annotations" value="5 GO annotations based on evolutionary models"/>
</dbReference>
<dbReference type="PhylomeDB" id="Q9ULW5"/>
<dbReference type="TreeFam" id="TF323428"/>
<dbReference type="PathwayCommons" id="Q9ULW5"/>
<dbReference type="Reactome" id="R-HSA-8873719">
    <property type="pathway name" value="RAB geranylgeranylation"/>
</dbReference>
<dbReference type="SignaLink" id="Q9ULW5"/>
<dbReference type="BioGRID-ORCS" id="25837">
    <property type="hits" value="19 hits in 1158 CRISPR screens"/>
</dbReference>
<dbReference type="ChiTaRS" id="RAB26">
    <property type="organism name" value="human"/>
</dbReference>
<dbReference type="EvolutionaryTrace" id="Q9ULW5"/>
<dbReference type="GeneWiki" id="RAB26"/>
<dbReference type="GenomeRNAi" id="25837"/>
<dbReference type="Pharos" id="Q9ULW5">
    <property type="development level" value="Tbio"/>
</dbReference>
<dbReference type="PRO" id="PR:Q9ULW5"/>
<dbReference type="Proteomes" id="UP000005640">
    <property type="component" value="Chromosome 16"/>
</dbReference>
<dbReference type="RNAct" id="Q9ULW5">
    <property type="molecule type" value="protein"/>
</dbReference>
<dbReference type="Bgee" id="ENSG00000167964">
    <property type="expression patterns" value="Expressed in right hemisphere of cerebellum and 143 other cell types or tissues"/>
</dbReference>
<dbReference type="ExpressionAtlas" id="Q9ULW5">
    <property type="expression patterns" value="baseline and differential"/>
</dbReference>
<dbReference type="GO" id="GO:0005768">
    <property type="term" value="C:endosome"/>
    <property type="evidence" value="ECO:0000318"/>
    <property type="project" value="GO_Central"/>
</dbReference>
<dbReference type="GO" id="GO:0005794">
    <property type="term" value="C:Golgi apparatus"/>
    <property type="evidence" value="ECO:0000318"/>
    <property type="project" value="GO_Central"/>
</dbReference>
<dbReference type="GO" id="GO:0000139">
    <property type="term" value="C:Golgi membrane"/>
    <property type="evidence" value="ECO:0000314"/>
    <property type="project" value="UniProtKB"/>
</dbReference>
<dbReference type="GO" id="GO:0005886">
    <property type="term" value="C:plasma membrane"/>
    <property type="evidence" value="ECO:0000250"/>
    <property type="project" value="UniProtKB"/>
</dbReference>
<dbReference type="GO" id="GO:0030667">
    <property type="term" value="C:secretory granule membrane"/>
    <property type="evidence" value="ECO:0000250"/>
    <property type="project" value="UniProtKB"/>
</dbReference>
<dbReference type="GO" id="GO:0030672">
    <property type="term" value="C:synaptic vesicle membrane"/>
    <property type="evidence" value="ECO:0000314"/>
    <property type="project" value="SynGO"/>
</dbReference>
<dbReference type="GO" id="GO:0019002">
    <property type="term" value="F:GMP binding"/>
    <property type="evidence" value="ECO:0000315"/>
    <property type="project" value="UniProtKB"/>
</dbReference>
<dbReference type="GO" id="GO:0005525">
    <property type="term" value="F:GTP binding"/>
    <property type="evidence" value="ECO:0000315"/>
    <property type="project" value="UniProtKB"/>
</dbReference>
<dbReference type="GO" id="GO:0003924">
    <property type="term" value="F:GTPase activity"/>
    <property type="evidence" value="ECO:0000318"/>
    <property type="project" value="GO_Central"/>
</dbReference>
<dbReference type="GO" id="GO:0035272">
    <property type="term" value="P:exocrine system development"/>
    <property type="evidence" value="ECO:0000315"/>
    <property type="project" value="UniProtKB"/>
</dbReference>
<dbReference type="GO" id="GO:0043001">
    <property type="term" value="P:Golgi to plasma membrane protein transport"/>
    <property type="evidence" value="ECO:0000315"/>
    <property type="project" value="UniProtKB"/>
</dbReference>
<dbReference type="GO" id="GO:0045055">
    <property type="term" value="P:regulated exocytosis"/>
    <property type="evidence" value="ECO:0000315"/>
    <property type="project" value="UniProtKB"/>
</dbReference>
<dbReference type="GO" id="GO:0017157">
    <property type="term" value="P:regulation of exocytosis"/>
    <property type="evidence" value="ECO:0000250"/>
    <property type="project" value="UniProtKB"/>
</dbReference>
<dbReference type="GO" id="GO:0140251">
    <property type="term" value="P:regulation protein catabolic process at presynapse"/>
    <property type="evidence" value="ECO:0000314"/>
    <property type="project" value="SynGO"/>
</dbReference>
<dbReference type="CDD" id="cd04112">
    <property type="entry name" value="Rab26"/>
    <property type="match status" value="1"/>
</dbReference>
<dbReference type="FunFam" id="3.40.50.300:FF:000459">
    <property type="entry name" value="ras-related protein Rab-37 isoform X1"/>
    <property type="match status" value="1"/>
</dbReference>
<dbReference type="Gene3D" id="3.40.50.300">
    <property type="entry name" value="P-loop containing nucleotide triphosphate hydrolases"/>
    <property type="match status" value="1"/>
</dbReference>
<dbReference type="InterPro" id="IPR027417">
    <property type="entry name" value="P-loop_NTPase"/>
</dbReference>
<dbReference type="InterPro" id="IPR005225">
    <property type="entry name" value="Small_GTP-bd"/>
</dbReference>
<dbReference type="InterPro" id="IPR001806">
    <property type="entry name" value="Small_GTPase"/>
</dbReference>
<dbReference type="InterPro" id="IPR050305">
    <property type="entry name" value="Small_GTPase_Rab"/>
</dbReference>
<dbReference type="NCBIfam" id="TIGR00231">
    <property type="entry name" value="small_GTP"/>
    <property type="match status" value="1"/>
</dbReference>
<dbReference type="PANTHER" id="PTHR47980">
    <property type="entry name" value="LD44762P"/>
    <property type="match status" value="1"/>
</dbReference>
<dbReference type="Pfam" id="PF00071">
    <property type="entry name" value="Ras"/>
    <property type="match status" value="1"/>
</dbReference>
<dbReference type="PRINTS" id="PR00449">
    <property type="entry name" value="RASTRNSFRMNG"/>
</dbReference>
<dbReference type="SMART" id="SM00177">
    <property type="entry name" value="ARF"/>
    <property type="match status" value="1"/>
</dbReference>
<dbReference type="SMART" id="SM00175">
    <property type="entry name" value="RAB"/>
    <property type="match status" value="1"/>
</dbReference>
<dbReference type="SMART" id="SM00176">
    <property type="entry name" value="RAN"/>
    <property type="match status" value="1"/>
</dbReference>
<dbReference type="SMART" id="SM00173">
    <property type="entry name" value="RAS"/>
    <property type="match status" value="1"/>
</dbReference>
<dbReference type="SMART" id="SM00174">
    <property type="entry name" value="RHO"/>
    <property type="match status" value="1"/>
</dbReference>
<dbReference type="SUPFAM" id="SSF52540">
    <property type="entry name" value="P-loop containing nucleoside triphosphate hydrolases"/>
    <property type="match status" value="1"/>
</dbReference>
<dbReference type="PROSITE" id="PS51419">
    <property type="entry name" value="RAB"/>
    <property type="match status" value="1"/>
</dbReference>
<accession>Q9ULW5</accession>
<accession>B2RAA6</accession>
<accession>Q3L6K5</accession>
<accession>Q6NXS7</accession>
<reference key="1">
    <citation type="submission" date="2004-06" db="EMBL/GenBank/DDBJ databases">
        <title>Cloning, expression and characterization of human Ras-related oncogene Rab26.</title>
        <authorList>
            <person name="Zhu N."/>
            <person name="Xu Y."/>
            <person name="Yang J."/>
            <person name="Li R."/>
        </authorList>
    </citation>
    <scope>NUCLEOTIDE SEQUENCE [MRNA] (ISOFORM 1)</scope>
    <source>
        <tissue>Fetal brain</tissue>
    </source>
</reference>
<reference key="2">
    <citation type="journal article" date="2004" name="Nat. Genet.">
        <title>Complete sequencing and characterization of 21,243 full-length human cDNAs.</title>
        <authorList>
            <person name="Ota T."/>
            <person name="Suzuki Y."/>
            <person name="Nishikawa T."/>
            <person name="Otsuki T."/>
            <person name="Sugiyama T."/>
            <person name="Irie R."/>
            <person name="Wakamatsu A."/>
            <person name="Hayashi K."/>
            <person name="Sato H."/>
            <person name="Nagai K."/>
            <person name="Kimura K."/>
            <person name="Makita H."/>
            <person name="Sekine M."/>
            <person name="Obayashi M."/>
            <person name="Nishi T."/>
            <person name="Shibahara T."/>
            <person name="Tanaka T."/>
            <person name="Ishii S."/>
            <person name="Yamamoto J."/>
            <person name="Saito K."/>
            <person name="Kawai Y."/>
            <person name="Isono Y."/>
            <person name="Nakamura Y."/>
            <person name="Nagahari K."/>
            <person name="Murakami K."/>
            <person name="Yasuda T."/>
            <person name="Iwayanagi T."/>
            <person name="Wagatsuma M."/>
            <person name="Shiratori A."/>
            <person name="Sudo H."/>
            <person name="Hosoiri T."/>
            <person name="Kaku Y."/>
            <person name="Kodaira H."/>
            <person name="Kondo H."/>
            <person name="Sugawara M."/>
            <person name="Takahashi M."/>
            <person name="Kanda K."/>
            <person name="Yokoi T."/>
            <person name="Furuya T."/>
            <person name="Kikkawa E."/>
            <person name="Omura Y."/>
            <person name="Abe K."/>
            <person name="Kamihara K."/>
            <person name="Katsuta N."/>
            <person name="Sato K."/>
            <person name="Tanikawa M."/>
            <person name="Yamazaki M."/>
            <person name="Ninomiya K."/>
            <person name="Ishibashi T."/>
            <person name="Yamashita H."/>
            <person name="Murakawa K."/>
            <person name="Fujimori K."/>
            <person name="Tanai H."/>
            <person name="Kimata M."/>
            <person name="Watanabe M."/>
            <person name="Hiraoka S."/>
            <person name="Chiba Y."/>
            <person name="Ishida S."/>
            <person name="Ono Y."/>
            <person name="Takiguchi S."/>
            <person name="Watanabe S."/>
            <person name="Yosida M."/>
            <person name="Hotuta T."/>
            <person name="Kusano J."/>
            <person name="Kanehori K."/>
            <person name="Takahashi-Fujii A."/>
            <person name="Hara H."/>
            <person name="Tanase T.-O."/>
            <person name="Nomura Y."/>
            <person name="Togiya S."/>
            <person name="Komai F."/>
            <person name="Hara R."/>
            <person name="Takeuchi K."/>
            <person name="Arita M."/>
            <person name="Imose N."/>
            <person name="Musashino K."/>
            <person name="Yuuki H."/>
            <person name="Oshima A."/>
            <person name="Sasaki N."/>
            <person name="Aotsuka S."/>
            <person name="Yoshikawa Y."/>
            <person name="Matsunawa H."/>
            <person name="Ichihara T."/>
            <person name="Shiohata N."/>
            <person name="Sano S."/>
            <person name="Moriya S."/>
            <person name="Momiyama H."/>
            <person name="Satoh N."/>
            <person name="Takami S."/>
            <person name="Terashima Y."/>
            <person name="Suzuki O."/>
            <person name="Nakagawa S."/>
            <person name="Senoh A."/>
            <person name="Mizoguchi H."/>
            <person name="Goto Y."/>
            <person name="Shimizu F."/>
            <person name="Wakebe H."/>
            <person name="Hishigaki H."/>
            <person name="Watanabe T."/>
            <person name="Sugiyama A."/>
            <person name="Takemoto M."/>
            <person name="Kawakami B."/>
            <person name="Yamazaki M."/>
            <person name="Watanabe K."/>
            <person name="Kumagai A."/>
            <person name="Itakura S."/>
            <person name="Fukuzumi Y."/>
            <person name="Fujimori Y."/>
            <person name="Komiyama M."/>
            <person name="Tashiro H."/>
            <person name="Tanigami A."/>
            <person name="Fujiwara T."/>
            <person name="Ono T."/>
            <person name="Yamada K."/>
            <person name="Fujii Y."/>
            <person name="Ozaki K."/>
            <person name="Hirao M."/>
            <person name="Ohmori Y."/>
            <person name="Kawabata A."/>
            <person name="Hikiji T."/>
            <person name="Kobatake N."/>
            <person name="Inagaki H."/>
            <person name="Ikema Y."/>
            <person name="Okamoto S."/>
            <person name="Okitani R."/>
            <person name="Kawakami T."/>
            <person name="Noguchi S."/>
            <person name="Itoh T."/>
            <person name="Shigeta K."/>
            <person name="Senba T."/>
            <person name="Matsumura K."/>
            <person name="Nakajima Y."/>
            <person name="Mizuno T."/>
            <person name="Morinaga M."/>
            <person name="Sasaki M."/>
            <person name="Togashi T."/>
            <person name="Oyama M."/>
            <person name="Hata H."/>
            <person name="Watanabe M."/>
            <person name="Komatsu T."/>
            <person name="Mizushima-Sugano J."/>
            <person name="Satoh T."/>
            <person name="Shirai Y."/>
            <person name="Takahashi Y."/>
            <person name="Nakagawa K."/>
            <person name="Okumura K."/>
            <person name="Nagase T."/>
            <person name="Nomura N."/>
            <person name="Kikuchi H."/>
            <person name="Masuho Y."/>
            <person name="Yamashita R."/>
            <person name="Nakai K."/>
            <person name="Yada T."/>
            <person name="Nakamura Y."/>
            <person name="Ohara O."/>
            <person name="Isogai T."/>
            <person name="Sugano S."/>
        </authorList>
    </citation>
    <scope>NUCLEOTIDE SEQUENCE [LARGE SCALE MRNA] (ISOFORM 2)</scope>
    <source>
        <tissue>Brain cortex</tissue>
    </source>
</reference>
<reference key="3">
    <citation type="journal article" date="2004" name="Nature">
        <title>The sequence and analysis of duplication-rich human chromosome 16.</title>
        <authorList>
            <person name="Martin J."/>
            <person name="Han C."/>
            <person name="Gordon L.A."/>
            <person name="Terry A."/>
            <person name="Prabhakar S."/>
            <person name="She X."/>
            <person name="Xie G."/>
            <person name="Hellsten U."/>
            <person name="Chan Y.M."/>
            <person name="Altherr M."/>
            <person name="Couronne O."/>
            <person name="Aerts A."/>
            <person name="Bajorek E."/>
            <person name="Black S."/>
            <person name="Blumer H."/>
            <person name="Branscomb E."/>
            <person name="Brown N.C."/>
            <person name="Bruno W.J."/>
            <person name="Buckingham J.M."/>
            <person name="Callen D.F."/>
            <person name="Campbell C.S."/>
            <person name="Campbell M.L."/>
            <person name="Campbell E.W."/>
            <person name="Caoile C."/>
            <person name="Challacombe J.F."/>
            <person name="Chasteen L.A."/>
            <person name="Chertkov O."/>
            <person name="Chi H.C."/>
            <person name="Christensen M."/>
            <person name="Clark L.M."/>
            <person name="Cohn J.D."/>
            <person name="Denys M."/>
            <person name="Detter J.C."/>
            <person name="Dickson M."/>
            <person name="Dimitrijevic-Bussod M."/>
            <person name="Escobar J."/>
            <person name="Fawcett J.J."/>
            <person name="Flowers D."/>
            <person name="Fotopulos D."/>
            <person name="Glavina T."/>
            <person name="Gomez M."/>
            <person name="Gonzales E."/>
            <person name="Goodstein D."/>
            <person name="Goodwin L.A."/>
            <person name="Grady D.L."/>
            <person name="Grigoriev I."/>
            <person name="Groza M."/>
            <person name="Hammon N."/>
            <person name="Hawkins T."/>
            <person name="Haydu L."/>
            <person name="Hildebrand C.E."/>
            <person name="Huang W."/>
            <person name="Israni S."/>
            <person name="Jett J."/>
            <person name="Jewett P.B."/>
            <person name="Kadner K."/>
            <person name="Kimball H."/>
            <person name="Kobayashi A."/>
            <person name="Krawczyk M.-C."/>
            <person name="Leyba T."/>
            <person name="Longmire J.L."/>
            <person name="Lopez F."/>
            <person name="Lou Y."/>
            <person name="Lowry S."/>
            <person name="Ludeman T."/>
            <person name="Manohar C.F."/>
            <person name="Mark G.A."/>
            <person name="McMurray K.L."/>
            <person name="Meincke L.J."/>
            <person name="Morgan J."/>
            <person name="Moyzis R.K."/>
            <person name="Mundt M.O."/>
            <person name="Munk A.C."/>
            <person name="Nandkeshwar R.D."/>
            <person name="Pitluck S."/>
            <person name="Pollard M."/>
            <person name="Predki P."/>
            <person name="Parson-Quintana B."/>
            <person name="Ramirez L."/>
            <person name="Rash S."/>
            <person name="Retterer J."/>
            <person name="Ricke D.O."/>
            <person name="Robinson D.L."/>
            <person name="Rodriguez A."/>
            <person name="Salamov A."/>
            <person name="Saunders E.H."/>
            <person name="Scott D."/>
            <person name="Shough T."/>
            <person name="Stallings R.L."/>
            <person name="Stalvey M."/>
            <person name="Sutherland R.D."/>
            <person name="Tapia R."/>
            <person name="Tesmer J.G."/>
            <person name="Thayer N."/>
            <person name="Thompson L.S."/>
            <person name="Tice H."/>
            <person name="Torney D.C."/>
            <person name="Tran-Gyamfi M."/>
            <person name="Tsai M."/>
            <person name="Ulanovsky L.E."/>
            <person name="Ustaszewska A."/>
            <person name="Vo N."/>
            <person name="White P.S."/>
            <person name="Williams A.L."/>
            <person name="Wills P.L."/>
            <person name="Wu J.-R."/>
            <person name="Wu K."/>
            <person name="Yang J."/>
            <person name="DeJong P."/>
            <person name="Bruce D."/>
            <person name="Doggett N.A."/>
            <person name="Deaven L."/>
            <person name="Schmutz J."/>
            <person name="Grimwood J."/>
            <person name="Richardson P."/>
            <person name="Rokhsar D.S."/>
            <person name="Eichler E.E."/>
            <person name="Gilna P."/>
            <person name="Lucas S.M."/>
            <person name="Myers R.M."/>
            <person name="Rubin E.M."/>
            <person name="Pennacchio L.A."/>
        </authorList>
    </citation>
    <scope>NUCLEOTIDE SEQUENCE [LARGE SCALE GENOMIC DNA]</scope>
</reference>
<reference key="4">
    <citation type="submission" date="2005-09" db="EMBL/GenBank/DDBJ databases">
        <authorList>
            <person name="Mural R.J."/>
            <person name="Istrail S."/>
            <person name="Sutton G."/>
            <person name="Florea L."/>
            <person name="Halpern A.L."/>
            <person name="Mobarry C.M."/>
            <person name="Lippert R."/>
            <person name="Walenz B."/>
            <person name="Shatkay H."/>
            <person name="Dew I."/>
            <person name="Miller J.R."/>
            <person name="Flanigan M.J."/>
            <person name="Edwards N.J."/>
            <person name="Bolanos R."/>
            <person name="Fasulo D."/>
            <person name="Halldorsson B.V."/>
            <person name="Hannenhalli S."/>
            <person name="Turner R."/>
            <person name="Yooseph S."/>
            <person name="Lu F."/>
            <person name="Nusskern D.R."/>
            <person name="Shue B.C."/>
            <person name="Zheng X.H."/>
            <person name="Zhong F."/>
            <person name="Delcher A.L."/>
            <person name="Huson D.H."/>
            <person name="Kravitz S.A."/>
            <person name="Mouchard L."/>
            <person name="Reinert K."/>
            <person name="Remington K.A."/>
            <person name="Clark A.G."/>
            <person name="Waterman M.S."/>
            <person name="Eichler E.E."/>
            <person name="Adams M.D."/>
            <person name="Hunkapiller M.W."/>
            <person name="Myers E.W."/>
            <person name="Venter J.C."/>
        </authorList>
    </citation>
    <scope>NUCLEOTIDE SEQUENCE [LARGE SCALE GENOMIC DNA]</scope>
</reference>
<reference key="5">
    <citation type="journal article" date="2004" name="Genome Res.">
        <title>The status, quality, and expansion of the NIH full-length cDNA project: the Mammalian Gene Collection (MGC).</title>
        <authorList>
            <consortium name="The MGC Project Team"/>
        </authorList>
    </citation>
    <scope>NUCLEOTIDE SEQUENCE [LARGE SCALE MRNA] (ISOFORM 1)</scope>
    <source>
        <tissue>Hippocampus</tissue>
    </source>
</reference>
<reference key="6">
    <citation type="journal article" date="2000" name="J. Hum. Genet.">
        <title>cDNA cloning of a human RAB26-related gene encoding a Ras-like GTP-binding protein on chromosome 16p13.3 region.</title>
        <authorList>
            <person name="Seki N."/>
            <person name="Yoshikawa T."/>
            <person name="Hattori A."/>
            <person name="Miyajima N."/>
            <person name="Muramatsu M."/>
            <person name="Saito T."/>
        </authorList>
    </citation>
    <scope>NUCLEOTIDE SEQUENCE [MRNA] OF 66-256 (ISOFORM 1)</scope>
    <source>
        <tissue>Fetal brain</tissue>
    </source>
</reference>
<reference key="7">
    <citation type="submission" date="2002-04" db="EMBL/GenBank/DDBJ databases">
        <title>cDNA clones of human proteins involved in signal transduction sequenced by the Guthrie cDNA resource center (www.cdna.org).</title>
        <authorList>
            <person name="Puhl H.L. III"/>
            <person name="Ikeda S.R."/>
            <person name="Aronstam R.S."/>
        </authorList>
    </citation>
    <scope>NUCLEOTIDE SEQUENCE [LARGE SCALE MRNA] OF 67-256 (ISOFORM 1)</scope>
    <source>
        <tissue>Brain</tissue>
    </source>
</reference>
<reference key="8">
    <citation type="journal article" date="2010" name="Mol. Cell. Biol.">
        <title>RAB26 and RAB3D are direct transcriptional targets of MIST1 that regulate exocrine granule maturation.</title>
        <authorList>
            <person name="Tian X."/>
            <person name="Jin R.U."/>
            <person name="Bredemeyer A.J."/>
            <person name="Oates E.J."/>
            <person name="Blazewska K.M."/>
            <person name="McKenna C.E."/>
            <person name="Mills J.C."/>
        </authorList>
    </citation>
    <scope>FUNCTION</scope>
    <scope>MUTAGENESIS OF THR-77</scope>
</reference>
<reference key="9">
    <citation type="journal article" date="2012" name="J. Biol. Chem.">
        <title>Rab26 modulates the cell surface transport of alpha2-adrenergic receptors from the Golgi.</title>
        <authorList>
            <person name="Li C."/>
            <person name="Fan Y."/>
            <person name="Lan T.H."/>
            <person name="Lambert N.A."/>
            <person name="Wu G."/>
        </authorList>
    </citation>
    <scope>FUNCTION</scope>
    <scope>INTERACTION WITH ADRA2B</scope>
    <scope>SUBCELLULAR LOCATION</scope>
    <scope>MUTAGENESIS OF THR-77; GLN-123 AND ASN-177</scope>
</reference>
<reference evidence="14" key="10">
    <citation type="submission" date="2009-02" db="PDB data bank">
        <title>Crystal structure of human RAB26 in complex with a GTP analogue.</title>
        <authorList>
            <consortium name="Structural genomics consortium (SGC)"/>
        </authorList>
    </citation>
    <scope>X-RAY CRYSTALLOGRAPHY (2.0 ANGSTROMS) OF 56-233 IN COMPLEX WITH MG(2+) AND GTP ANALOG</scope>
    <scope>COFACTOR</scope>
</reference>
<protein>
    <recommendedName>
        <fullName>Ras-related protein Rab-26</fullName>
        <ecNumber evidence="3">3.6.5.2</ecNumber>
    </recommendedName>
</protein>
<organism>
    <name type="scientific">Homo sapiens</name>
    <name type="common">Human</name>
    <dbReference type="NCBI Taxonomy" id="9606"/>
    <lineage>
        <taxon>Eukaryota</taxon>
        <taxon>Metazoa</taxon>
        <taxon>Chordata</taxon>
        <taxon>Craniata</taxon>
        <taxon>Vertebrata</taxon>
        <taxon>Euteleostomi</taxon>
        <taxon>Mammalia</taxon>
        <taxon>Eutheria</taxon>
        <taxon>Euarchontoglires</taxon>
        <taxon>Primates</taxon>
        <taxon>Haplorrhini</taxon>
        <taxon>Catarrhini</taxon>
        <taxon>Hominidae</taxon>
        <taxon>Homo</taxon>
    </lineage>
</organism>
<keyword id="KW-0002">3D-structure</keyword>
<keyword id="KW-0025">Alternative splicing</keyword>
<keyword id="KW-0968">Cytoplasmic vesicle</keyword>
<keyword id="KW-0333">Golgi apparatus</keyword>
<keyword id="KW-0342">GTP-binding</keyword>
<keyword id="KW-0378">Hydrolase</keyword>
<keyword id="KW-0449">Lipoprotein</keyword>
<keyword id="KW-0460">Magnesium</keyword>
<keyword id="KW-0472">Membrane</keyword>
<keyword id="KW-0479">Metal-binding</keyword>
<keyword id="KW-0547">Nucleotide-binding</keyword>
<keyword id="KW-0636">Prenylation</keyword>
<keyword id="KW-0653">Protein transport</keyword>
<keyword id="KW-1267">Proteomics identification</keyword>
<keyword id="KW-1185">Reference proteome</keyword>
<keyword id="KW-0813">Transport</keyword>
<name>RAB26_HUMAN</name>
<gene>
    <name evidence="13" type="primary">RAB26</name>
</gene>
<evidence type="ECO:0000250" key="1"/>
<evidence type="ECO:0000250" key="2">
    <source>
        <dbReference type="UniProtKB" id="P51156"/>
    </source>
</evidence>
<evidence type="ECO:0000250" key="3">
    <source>
        <dbReference type="UniProtKB" id="P61006"/>
    </source>
</evidence>
<evidence type="ECO:0000250" key="4">
    <source>
        <dbReference type="UniProtKB" id="P62820"/>
    </source>
</evidence>
<evidence type="ECO:0000256" key="5">
    <source>
        <dbReference type="SAM" id="MobiDB-lite"/>
    </source>
</evidence>
<evidence type="ECO:0000269" key="6">
    <source>
    </source>
</evidence>
<evidence type="ECO:0000269" key="7">
    <source>
    </source>
</evidence>
<evidence type="ECO:0000269" key="8">
    <source ref="10"/>
</evidence>
<evidence type="ECO:0000303" key="9">
    <source>
    </source>
</evidence>
<evidence type="ECO:0000305" key="10"/>
<evidence type="ECO:0000305" key="11">
    <source>
    </source>
</evidence>
<evidence type="ECO:0000305" key="12">
    <source ref="10"/>
</evidence>
<evidence type="ECO:0000312" key="13">
    <source>
        <dbReference type="HGNC" id="HGNC:14259"/>
    </source>
</evidence>
<evidence type="ECO:0007744" key="14">
    <source>
        <dbReference type="PDB" id="2G6B"/>
    </source>
</evidence>
<evidence type="ECO:0007829" key="15">
    <source>
        <dbReference type="PDB" id="2G6B"/>
    </source>
</evidence>